<feature type="chain" id="PRO_0000082073" description="ATP synthase subunit a">
    <location>
        <begin position="1"/>
        <end position="238"/>
    </location>
</feature>
<feature type="transmembrane region" description="Helical" evidence="1">
    <location>
        <begin position="15"/>
        <end position="35"/>
    </location>
</feature>
<feature type="transmembrane region" description="Helical" evidence="1">
    <location>
        <begin position="76"/>
        <end position="96"/>
    </location>
</feature>
<feature type="transmembrane region" description="Helical" evidence="1">
    <location>
        <begin position="111"/>
        <end position="131"/>
    </location>
</feature>
<feature type="transmembrane region" description="Helical" evidence="1">
    <location>
        <begin position="167"/>
        <end position="187"/>
    </location>
</feature>
<feature type="transmembrane region" description="Helical" evidence="1">
    <location>
        <begin position="208"/>
        <end position="230"/>
    </location>
</feature>
<feature type="sequence conflict" description="In Ref. 4; AAL66412." evidence="3" ref="4">
    <original>G</original>
    <variation>E</variation>
    <location>
        <position position="104"/>
    </location>
</feature>
<proteinExistence type="evidence at protein level"/>
<dbReference type="EMBL" id="Z26851">
    <property type="protein sequence ID" value="CAA81453.2"/>
    <property type="molecule type" value="Genomic_DNA"/>
</dbReference>
<dbReference type="EMBL" id="AF334388">
    <property type="protein sequence ID" value="AAK77028.1"/>
    <property type="molecule type" value="Genomic_DNA"/>
</dbReference>
<dbReference type="EMBL" id="AF368465">
    <property type="protein sequence ID" value="AAL66412.1"/>
    <property type="molecule type" value="Genomic_DNA"/>
</dbReference>
<dbReference type="EMBL" id="AE007317">
    <property type="protein sequence ID" value="AAL00169.1"/>
    <property type="molecule type" value="Genomic_DNA"/>
</dbReference>
<dbReference type="PIR" id="D98042">
    <property type="entry name" value="D98042"/>
</dbReference>
<dbReference type="PIR" id="S49405">
    <property type="entry name" value="S49405"/>
</dbReference>
<dbReference type="RefSeq" id="NP_358958.1">
    <property type="nucleotide sequence ID" value="NC_003098.1"/>
</dbReference>
<dbReference type="RefSeq" id="WP_000392851.1">
    <property type="nucleotide sequence ID" value="NC_003098.1"/>
</dbReference>
<dbReference type="SMR" id="P0A2Y9"/>
<dbReference type="STRING" id="171101.spr1365"/>
<dbReference type="GeneID" id="45653248"/>
<dbReference type="KEGG" id="spr:spr1365"/>
<dbReference type="PATRIC" id="fig|171101.6.peg.1479"/>
<dbReference type="eggNOG" id="COG0356">
    <property type="taxonomic scope" value="Bacteria"/>
</dbReference>
<dbReference type="HOGENOM" id="CLU_041018_2_3_9"/>
<dbReference type="Proteomes" id="UP000000586">
    <property type="component" value="Chromosome"/>
</dbReference>
<dbReference type="GO" id="GO:0005886">
    <property type="term" value="C:plasma membrane"/>
    <property type="evidence" value="ECO:0000318"/>
    <property type="project" value="GO_Central"/>
</dbReference>
<dbReference type="GO" id="GO:0045259">
    <property type="term" value="C:proton-transporting ATP synthase complex"/>
    <property type="evidence" value="ECO:0007669"/>
    <property type="project" value="UniProtKB-KW"/>
</dbReference>
<dbReference type="GO" id="GO:0046933">
    <property type="term" value="F:proton-transporting ATP synthase activity, rotational mechanism"/>
    <property type="evidence" value="ECO:0000318"/>
    <property type="project" value="GO_Central"/>
</dbReference>
<dbReference type="GO" id="GO:0042777">
    <property type="term" value="P:proton motive force-driven plasma membrane ATP synthesis"/>
    <property type="evidence" value="ECO:0000318"/>
    <property type="project" value="GO_Central"/>
</dbReference>
<dbReference type="GO" id="GO:0046677">
    <property type="term" value="P:response to antibiotic"/>
    <property type="evidence" value="ECO:0007669"/>
    <property type="project" value="UniProtKB-KW"/>
</dbReference>
<dbReference type="CDD" id="cd00310">
    <property type="entry name" value="ATP-synt_Fo_a_6"/>
    <property type="match status" value="1"/>
</dbReference>
<dbReference type="Gene3D" id="1.20.120.220">
    <property type="entry name" value="ATP synthase, F0 complex, subunit A"/>
    <property type="match status" value="1"/>
</dbReference>
<dbReference type="HAMAP" id="MF_01393">
    <property type="entry name" value="ATP_synth_a_bact"/>
    <property type="match status" value="1"/>
</dbReference>
<dbReference type="InterPro" id="IPR045082">
    <property type="entry name" value="ATP_syn_F0_a_bact/chloroplast"/>
</dbReference>
<dbReference type="InterPro" id="IPR000568">
    <property type="entry name" value="ATP_synth_F0_asu"/>
</dbReference>
<dbReference type="InterPro" id="IPR035908">
    <property type="entry name" value="F0_ATP_A_sf"/>
</dbReference>
<dbReference type="NCBIfam" id="TIGR01131">
    <property type="entry name" value="ATP_synt_6_or_A"/>
    <property type="match status" value="1"/>
</dbReference>
<dbReference type="NCBIfam" id="NF004479">
    <property type="entry name" value="PRK05815.1-4"/>
    <property type="match status" value="1"/>
</dbReference>
<dbReference type="PANTHER" id="PTHR42823">
    <property type="entry name" value="ATP SYNTHASE SUBUNIT A, CHLOROPLASTIC"/>
    <property type="match status" value="1"/>
</dbReference>
<dbReference type="PANTHER" id="PTHR42823:SF3">
    <property type="entry name" value="ATP SYNTHASE SUBUNIT A, CHLOROPLASTIC"/>
    <property type="match status" value="1"/>
</dbReference>
<dbReference type="Pfam" id="PF00119">
    <property type="entry name" value="ATP-synt_A"/>
    <property type="match status" value="1"/>
</dbReference>
<dbReference type="PRINTS" id="PR00123">
    <property type="entry name" value="ATPASEA"/>
</dbReference>
<dbReference type="SUPFAM" id="SSF81336">
    <property type="entry name" value="F1F0 ATP synthase subunit A"/>
    <property type="match status" value="1"/>
</dbReference>
<organism>
    <name type="scientific">Streptococcus pneumoniae (strain ATCC BAA-255 / R6)</name>
    <dbReference type="NCBI Taxonomy" id="171101"/>
    <lineage>
        <taxon>Bacteria</taxon>
        <taxon>Bacillati</taxon>
        <taxon>Bacillota</taxon>
        <taxon>Bacilli</taxon>
        <taxon>Lactobacillales</taxon>
        <taxon>Streptococcaceae</taxon>
        <taxon>Streptococcus</taxon>
    </lineage>
</organism>
<gene>
    <name evidence="1" type="primary">atpB</name>
    <name type="synonym">atpA</name>
    <name type="synonym">uncB</name>
    <name type="ordered locus">spr1365</name>
</gene>
<sequence length="238" mass="27208">MEESINPIISIGPVIFNLTMLAMTLLIVGVIFVFIYWASRNMTLKPKGKQNVLEYVYDFVIGFTEPNIGSRYMKDYSLFFLCLFLFMVIANNLGLMTKLQTIDGTNWWSSPTANLQYDLTLSFLVILLTHIESVRRRGFKKSIKSFMSPVFVIPMNILEEFTNFLSLALRIFGNIFAGEVMTSLLLLLSHQAIYWYPVAFGANLAWTAFSVFISCIQAYVFTLLTSVYLGNKINIEEE</sequence>
<evidence type="ECO:0000255" key="1">
    <source>
        <dbReference type="HAMAP-Rule" id="MF_01393"/>
    </source>
</evidence>
<evidence type="ECO:0000269" key="2">
    <source>
    </source>
</evidence>
<evidence type="ECO:0000305" key="3"/>
<evidence type="ECO:0000305" key="4">
    <source>
    </source>
</evidence>
<comment type="function">
    <text evidence="1">Key component of the proton channel; it plays a direct role in the translocation of protons across the membrane.</text>
</comment>
<comment type="subunit">
    <text evidence="1 2">F-type ATPases have 2 components, CF(1) - the catalytic core - and CF(0) - the membrane proton channel. CF(1) has five subunits: alpha(3), beta(3), gamma(1), delta(1), epsilon(1). CF(0) has three main subunits: a(1), b(2) and c(9-12). The alpha and beta chains form an alternating ring which encloses part of the gamma chain. CF(1) is attached to CF(0) by a central stalk formed by the gamma and epsilon chains, while a peripheral stalk is formed by the delta and b chains.</text>
</comment>
<comment type="subcellular location">
    <subcellularLocation>
        <location evidence="4">Cell membrane</location>
        <topology evidence="4">Multi-pass membrane protein</topology>
    </subcellularLocation>
</comment>
<comment type="induction">
    <text evidence="2">Induced by a decrease in external pH from 7.5 to 5.7.</text>
</comment>
<comment type="similarity">
    <text evidence="1">Belongs to the ATPase A chain family.</text>
</comment>
<name>ATP6_STRR6</name>
<protein>
    <recommendedName>
        <fullName evidence="1">ATP synthase subunit a</fullName>
    </recommendedName>
    <alternativeName>
        <fullName evidence="1">ATP synthase F0 sector subunit a</fullName>
    </alternativeName>
    <alternativeName>
        <fullName evidence="1">F-ATPase subunit 6</fullName>
    </alternativeName>
</protein>
<keyword id="KW-0046">Antibiotic resistance</keyword>
<keyword id="KW-0066">ATP synthesis</keyword>
<keyword id="KW-1003">Cell membrane</keyword>
<keyword id="KW-0138">CF(0)</keyword>
<keyword id="KW-0375">Hydrogen ion transport</keyword>
<keyword id="KW-0406">Ion transport</keyword>
<keyword id="KW-0472">Membrane</keyword>
<keyword id="KW-1185">Reference proteome</keyword>
<keyword id="KW-0812">Transmembrane</keyword>
<keyword id="KW-1133">Transmembrane helix</keyword>
<keyword id="KW-0813">Transport</keyword>
<accession>P0A2Y9</accession>
<accession>Q59954</accession>
<accession>Q933D3</accession>
<accession>Q93PE9</accession>
<accession>Q9K3B5</accession>
<reference key="1">
    <citation type="journal article" date="1994" name="Mol. Microbiol.">
        <title>Molecular basis of the optochin-sensitive phenotype of pneumococcus: characterization of the genes encoding the F0 complex of the Streptococcus pneumoniae and Streptococcus oralis H(+)-ATPases.</title>
        <authorList>
            <person name="Fenoll A."/>
            <person name="Munoz R."/>
            <person name="Garcia E."/>
            <person name="de la Campa A.G."/>
        </authorList>
    </citation>
    <scope>NUCLEOTIDE SEQUENCE [GENOMIC DNA]</scope>
</reference>
<reference key="2">
    <citation type="submission" date="2001-11" db="EMBL/GenBank/DDBJ databases">
        <authorList>
            <person name="Garcia E."/>
        </authorList>
    </citation>
    <scope>SEQUENCE REVISION TO 104</scope>
</reference>
<reference key="3">
    <citation type="journal article" date="2001" name="J. Infect. Dis.">
        <title>Optochin resistance in Streptococcus pneumoniae: mechanism, significance, and clinical implications.</title>
        <authorList>
            <person name="Pikis A."/>
            <person name="Campos J.M."/>
            <person name="Rodriguez W.J."/>
            <person name="Keith J.M."/>
        </authorList>
    </citation>
    <scope>NUCLEOTIDE SEQUENCE [GENOMIC DNA]</scope>
</reference>
<reference key="4">
    <citation type="journal article" date="2001" name="Mol. Microbiol.">
        <title>The promoter of the operon encoding the F0F1 ATPase of Streptococcus pneumoniae is inducible by pH.</title>
        <authorList>
            <person name="Martin-Galiano A.J."/>
            <person name="Ferrandiz M.J."/>
            <person name="de la Campa A.G."/>
        </authorList>
    </citation>
    <scope>NUCLEOTIDE SEQUENCE [GENOMIC DNA]</scope>
    <scope>SUBUNIT</scope>
    <scope>SUBCELLULAR LOCATION</scope>
    <scope>INDUCTION</scope>
</reference>
<reference key="5">
    <citation type="journal article" date="2001" name="J. Bacteriol.">
        <title>Genome of the bacterium Streptococcus pneumoniae strain R6.</title>
        <authorList>
            <person name="Hoskins J."/>
            <person name="Alborn W.E. Jr."/>
            <person name="Arnold J."/>
            <person name="Blaszczak L.C."/>
            <person name="Burgett S."/>
            <person name="DeHoff B.S."/>
            <person name="Estrem S.T."/>
            <person name="Fritz L."/>
            <person name="Fu D.-J."/>
            <person name="Fuller W."/>
            <person name="Geringer C."/>
            <person name="Gilmour R."/>
            <person name="Glass J.S."/>
            <person name="Khoja H."/>
            <person name="Kraft A.R."/>
            <person name="Lagace R.E."/>
            <person name="LeBlanc D.J."/>
            <person name="Lee L.N."/>
            <person name="Lefkowitz E.J."/>
            <person name="Lu J."/>
            <person name="Matsushima P."/>
            <person name="McAhren S.M."/>
            <person name="McHenney M."/>
            <person name="McLeaster K."/>
            <person name="Mundy C.W."/>
            <person name="Nicas T.I."/>
            <person name="Norris F.H."/>
            <person name="O'Gara M."/>
            <person name="Peery R.B."/>
            <person name="Robertson G.T."/>
            <person name="Rockey P."/>
            <person name="Sun P.-M."/>
            <person name="Winkler M.E."/>
            <person name="Yang Y."/>
            <person name="Young-Bellido M."/>
            <person name="Zhao G."/>
            <person name="Zook C.A."/>
            <person name="Baltz R.H."/>
            <person name="Jaskunas S.R."/>
            <person name="Rosteck P.R. Jr."/>
            <person name="Skatrud P.L."/>
            <person name="Glass J.I."/>
        </authorList>
    </citation>
    <scope>NUCLEOTIDE SEQUENCE [LARGE SCALE GENOMIC DNA]</scope>
    <source>
        <strain>ATCC BAA-255 / R6</strain>
    </source>
</reference>